<dbReference type="EMBL" id="CR931997">
    <property type="protein sequence ID" value="CAI37706.1"/>
    <property type="molecule type" value="Genomic_DNA"/>
</dbReference>
<dbReference type="RefSeq" id="WP_011273951.1">
    <property type="nucleotide sequence ID" value="NC_007164.1"/>
</dbReference>
<dbReference type="SMR" id="Q4JU01"/>
<dbReference type="STRING" id="306537.jk1533"/>
<dbReference type="GeneID" id="92739171"/>
<dbReference type="KEGG" id="cjk:jk1533"/>
<dbReference type="PATRIC" id="fig|306537.10.peg.1553"/>
<dbReference type="eggNOG" id="ENOG5033AVR">
    <property type="taxonomic scope" value="Bacteria"/>
</dbReference>
<dbReference type="HOGENOM" id="CLU_203263_0_0_11"/>
<dbReference type="OrthoDB" id="9807363at2"/>
<dbReference type="Proteomes" id="UP000000545">
    <property type="component" value="Chromosome"/>
</dbReference>
<dbReference type="GO" id="GO:0015934">
    <property type="term" value="C:large ribosomal subunit"/>
    <property type="evidence" value="ECO:0007669"/>
    <property type="project" value="InterPro"/>
</dbReference>
<dbReference type="GO" id="GO:0003735">
    <property type="term" value="F:structural constituent of ribosome"/>
    <property type="evidence" value="ECO:0007669"/>
    <property type="project" value="InterPro"/>
</dbReference>
<dbReference type="GO" id="GO:0006412">
    <property type="term" value="P:translation"/>
    <property type="evidence" value="ECO:0007669"/>
    <property type="project" value="UniProtKB-UniRule"/>
</dbReference>
<dbReference type="HAMAP" id="MF_00340">
    <property type="entry name" value="Ribosomal_bL32"/>
    <property type="match status" value="1"/>
</dbReference>
<dbReference type="InterPro" id="IPR002677">
    <property type="entry name" value="Ribosomal_bL32"/>
</dbReference>
<dbReference type="InterPro" id="IPR011332">
    <property type="entry name" value="Ribosomal_zn-bd"/>
</dbReference>
<dbReference type="NCBIfam" id="TIGR01031">
    <property type="entry name" value="rpmF_bact"/>
    <property type="match status" value="1"/>
</dbReference>
<dbReference type="Pfam" id="PF01783">
    <property type="entry name" value="Ribosomal_L32p"/>
    <property type="match status" value="1"/>
</dbReference>
<dbReference type="SUPFAM" id="SSF57829">
    <property type="entry name" value="Zn-binding ribosomal proteins"/>
    <property type="match status" value="1"/>
</dbReference>
<evidence type="ECO:0000255" key="1">
    <source>
        <dbReference type="HAMAP-Rule" id="MF_00340"/>
    </source>
</evidence>
<evidence type="ECO:0000256" key="2">
    <source>
        <dbReference type="SAM" id="MobiDB-lite"/>
    </source>
</evidence>
<evidence type="ECO:0000305" key="3"/>
<protein>
    <recommendedName>
        <fullName evidence="1">Large ribosomal subunit protein bL32</fullName>
    </recommendedName>
    <alternativeName>
        <fullName evidence="3">50S ribosomal protein L32</fullName>
    </alternativeName>
</protein>
<proteinExistence type="inferred from homology"/>
<gene>
    <name evidence="1" type="primary">rpmF</name>
    <name type="ordered locus">jk1533</name>
</gene>
<reference key="1">
    <citation type="journal article" date="2005" name="J. Bacteriol.">
        <title>Complete genome sequence and analysis of the multiresistant nosocomial pathogen Corynebacterium jeikeium K411, a lipid-requiring bacterium of the human skin flora.</title>
        <authorList>
            <person name="Tauch A."/>
            <person name="Kaiser O."/>
            <person name="Hain T."/>
            <person name="Goesmann A."/>
            <person name="Weisshaar B."/>
            <person name="Albersmeier A."/>
            <person name="Bekel T."/>
            <person name="Bischoff N."/>
            <person name="Brune I."/>
            <person name="Chakraborty T."/>
            <person name="Kalinowski J."/>
            <person name="Meyer F."/>
            <person name="Rupp O."/>
            <person name="Schneiker S."/>
            <person name="Viehoever P."/>
            <person name="Puehler A."/>
        </authorList>
    </citation>
    <scope>NUCLEOTIDE SEQUENCE [LARGE SCALE GENOMIC DNA]</scope>
    <source>
        <strain>K411</strain>
    </source>
</reference>
<keyword id="KW-1185">Reference proteome</keyword>
<keyword id="KW-0687">Ribonucleoprotein</keyword>
<keyword id="KW-0689">Ribosomal protein</keyword>
<feature type="chain" id="PRO_0000296454" description="Large ribosomal subunit protein bL32">
    <location>
        <begin position="1"/>
        <end position="55"/>
    </location>
</feature>
<feature type="region of interest" description="Disordered" evidence="2">
    <location>
        <begin position="1"/>
        <end position="20"/>
    </location>
</feature>
<feature type="compositionally biased region" description="Basic residues" evidence="2">
    <location>
        <begin position="1"/>
        <end position="19"/>
    </location>
</feature>
<organism>
    <name type="scientific">Corynebacterium jeikeium (strain K411)</name>
    <dbReference type="NCBI Taxonomy" id="306537"/>
    <lineage>
        <taxon>Bacteria</taxon>
        <taxon>Bacillati</taxon>
        <taxon>Actinomycetota</taxon>
        <taxon>Actinomycetes</taxon>
        <taxon>Mycobacteriales</taxon>
        <taxon>Corynebacteriaceae</taxon>
        <taxon>Corynebacterium</taxon>
    </lineage>
</organism>
<sequence>MAVPKRRMSRANTHSRRSQWKADNVALQHVKVQGQDVQIPRRLVKAAQLGLIDLD</sequence>
<name>RL32_CORJK</name>
<comment type="similarity">
    <text evidence="1">Belongs to the bacterial ribosomal protein bL32 family.</text>
</comment>
<accession>Q4JU01</accession>